<sequence>MNVIDLSDPAINVDYDSLIGIDNEESQEIFENEVKEDGQQEEQEEASSRKDGLIVEPGRDVESLRRAIRDQLLFKIHRQNQSDCADARKLSNDEEDESRQQKLERIREELEELKIENLTSEMQTEIKELCEIQSKLATESSSRLTNLRKKLLETYEGQDTVILPNIILDTSNIKRLQKLDQKISLMERFVGIPEALEAEEDRKSVHSKVNELYRSIQLLQGDDKAEGKLQKFRDRLVELNEEFENSLLGKKIQQDLRLKDDTVSKLVMPENKVKEINSMYSMFKQYQDSLPLLAERMKSLNKMNNRVIEVYETTKGLDSQITSIQEQGKVWLKALNELDKKFDEQEVKIRENMEQIRRKIDTLEDEALQRNSK</sequence>
<name>JNM1_YEAST</name>
<dbReference type="EMBL" id="Z25750">
    <property type="protein sequence ID" value="CAA81023.1"/>
    <property type="molecule type" value="Genomic_DNA"/>
</dbReference>
<dbReference type="EMBL" id="X80836">
    <property type="protein sequence ID" value="CAA56803.1"/>
    <property type="molecule type" value="Genomic_DNA"/>
</dbReference>
<dbReference type="EMBL" id="BK006946">
    <property type="protein sequence ID" value="DAA10195.1"/>
    <property type="molecule type" value="Genomic_DNA"/>
</dbReference>
<dbReference type="PIR" id="S47455">
    <property type="entry name" value="S47455"/>
</dbReference>
<dbReference type="RefSeq" id="NP_014022.1">
    <property type="nucleotide sequence ID" value="NM_001182802.1"/>
</dbReference>
<dbReference type="SMR" id="P36224"/>
<dbReference type="BioGRID" id="35474">
    <property type="interactions" value="441"/>
</dbReference>
<dbReference type="ComplexPortal" id="CPX-1805">
    <property type="entry name" value="Dynactin complex"/>
</dbReference>
<dbReference type="DIP" id="DIP-2387N"/>
<dbReference type="FunCoup" id="P36224">
    <property type="interactions" value="112"/>
</dbReference>
<dbReference type="IntAct" id="P36224">
    <property type="interactions" value="8"/>
</dbReference>
<dbReference type="STRING" id="4932.YMR294W"/>
<dbReference type="iPTMnet" id="P36224"/>
<dbReference type="PaxDb" id="4932-YMR294W"/>
<dbReference type="PeptideAtlas" id="P36224"/>
<dbReference type="EnsemblFungi" id="YMR294W_mRNA">
    <property type="protein sequence ID" value="YMR294W"/>
    <property type="gene ID" value="YMR294W"/>
</dbReference>
<dbReference type="GeneID" id="855339"/>
<dbReference type="KEGG" id="sce:YMR294W"/>
<dbReference type="AGR" id="SGD:S000004908"/>
<dbReference type="SGD" id="S000004908">
    <property type="gene designation" value="JNM1"/>
</dbReference>
<dbReference type="VEuPathDB" id="FungiDB:YMR294W"/>
<dbReference type="eggNOG" id="ENOG502S656">
    <property type="taxonomic scope" value="Eukaryota"/>
</dbReference>
<dbReference type="HOGENOM" id="CLU_063117_0_0_1"/>
<dbReference type="InParanoid" id="P36224"/>
<dbReference type="OMA" id="MKNNIDL"/>
<dbReference type="OrthoDB" id="4977at2759"/>
<dbReference type="BioCyc" id="YEAST:G3O-32964-MONOMER"/>
<dbReference type="BioGRID-ORCS" id="855339">
    <property type="hits" value="4 hits in 10 CRISPR screens"/>
</dbReference>
<dbReference type="PRO" id="PR:P36224"/>
<dbReference type="Proteomes" id="UP000002311">
    <property type="component" value="Chromosome XIII"/>
</dbReference>
<dbReference type="RNAct" id="P36224">
    <property type="molecule type" value="protein"/>
</dbReference>
<dbReference type="GO" id="GO:0015629">
    <property type="term" value="C:actin cytoskeleton"/>
    <property type="evidence" value="ECO:0000303"/>
    <property type="project" value="ComplexPortal"/>
</dbReference>
<dbReference type="GO" id="GO:0005737">
    <property type="term" value="C:cytoplasm"/>
    <property type="evidence" value="ECO:0000318"/>
    <property type="project" value="GO_Central"/>
</dbReference>
<dbReference type="GO" id="GO:0005869">
    <property type="term" value="C:dynactin complex"/>
    <property type="evidence" value="ECO:0000314"/>
    <property type="project" value="SGD"/>
</dbReference>
<dbReference type="GO" id="GO:0030286">
    <property type="term" value="C:dynein complex"/>
    <property type="evidence" value="ECO:0007669"/>
    <property type="project" value="UniProtKB-KW"/>
</dbReference>
<dbReference type="GO" id="GO:0005874">
    <property type="term" value="C:microtubule"/>
    <property type="evidence" value="ECO:0007669"/>
    <property type="project" value="UniProtKB-KW"/>
</dbReference>
<dbReference type="GO" id="GO:0005200">
    <property type="term" value="F:structural constituent of cytoskeleton"/>
    <property type="evidence" value="ECO:0000314"/>
    <property type="project" value="SGD"/>
</dbReference>
<dbReference type="GO" id="GO:0030048">
    <property type="term" value="P:actin filament-based movement"/>
    <property type="evidence" value="ECO:0000303"/>
    <property type="project" value="ComplexPortal"/>
</dbReference>
<dbReference type="GO" id="GO:0000132">
    <property type="term" value="P:establishment of mitotic spindle orientation"/>
    <property type="evidence" value="ECO:0000315"/>
    <property type="project" value="SGD"/>
</dbReference>
<dbReference type="GO" id="GO:0007052">
    <property type="term" value="P:mitotic spindle organization"/>
    <property type="evidence" value="ECO:0000318"/>
    <property type="project" value="GO_Central"/>
</dbReference>
<dbReference type="GO" id="GO:0007097">
    <property type="term" value="P:nuclear migration"/>
    <property type="evidence" value="ECO:0000315"/>
    <property type="project" value="SGD"/>
</dbReference>
<dbReference type="InterPro" id="IPR028133">
    <property type="entry name" value="Dynamitin"/>
</dbReference>
<dbReference type="PANTHER" id="PTHR15346">
    <property type="entry name" value="DYNACTIN SUBUNIT"/>
    <property type="match status" value="1"/>
</dbReference>
<dbReference type="Pfam" id="PF04912">
    <property type="entry name" value="Dynamitin"/>
    <property type="match status" value="1"/>
</dbReference>
<proteinExistence type="evidence at protein level"/>
<protein>
    <recommendedName>
        <fullName>Nuclear migration protein JNM1</fullName>
    </recommendedName>
</protein>
<comment type="function">
    <text evidence="1 4 7">Component of the dynactin complex which assists cytoplasmic dynein by increasing its processivity and by regulation of its cargo binding (By similarity). The dynactin complex is required for the spindle translocation late in anaphase and is involved in a cell wall synthesis checkpoint. JNM1 is associated with the rod and links it to the projecting sidearm. Required for proper nuclear migration during the mitotic cell cycle and for astral microtubule development.</text>
</comment>
<comment type="subunit">
    <text evidence="1 5 6 7">Component of the dynactin complex composed of at least ARP1, JNM1, NIP100 and ARP10. Dynactin comprises a short rod of ARP1 polymers attached to ARP10 at its pointed-end and probably associated with the capping protein at its barbed-end. The rod structure is implicated in dynein cargo binding. A sidearm formed by NIP100 projects from the ARP1 filament and is implicated in motor binding (By similarity). Interacts with ARP1.</text>
</comment>
<comment type="interaction">
    <interactant intactId="EBI-9415">
        <id>P36224</id>
    </interactant>
    <interactant intactId="EBI-2920">
        <id>P38696</id>
        <label>ARP1</label>
    </interactant>
    <organismsDiffer>false</organismsDiffer>
    <experiments>7</experiments>
</comment>
<comment type="interaction">
    <interactant intactId="EBI-9415">
        <id>P36224</id>
    </interactant>
    <interactant intactId="EBI-2977">
        <id>Q04549</id>
        <label>ARP10</label>
    </interactant>
    <organismsDiffer>false</organismsDiffer>
    <experiments>3</experiments>
</comment>
<comment type="interaction">
    <interactant intactId="EBI-9415">
        <id>P36224</id>
    </interactant>
    <interactant intactId="EBI-12049">
        <id>P33420</id>
        <label>NIP100</label>
    </interactant>
    <organismsDiffer>false</organismsDiffer>
    <experiments>2</experiments>
</comment>
<comment type="subcellular location">
    <subcellularLocation>
        <location evidence="8">Cytoplasm</location>
        <location evidence="8">Cytoskeleton</location>
    </subcellularLocation>
</comment>
<organism>
    <name type="scientific">Saccharomyces cerevisiae (strain ATCC 204508 / S288c)</name>
    <name type="common">Baker's yeast</name>
    <dbReference type="NCBI Taxonomy" id="559292"/>
    <lineage>
        <taxon>Eukaryota</taxon>
        <taxon>Fungi</taxon>
        <taxon>Dikarya</taxon>
        <taxon>Ascomycota</taxon>
        <taxon>Saccharomycotina</taxon>
        <taxon>Saccharomycetes</taxon>
        <taxon>Saccharomycetales</taxon>
        <taxon>Saccharomycetaceae</taxon>
        <taxon>Saccharomyces</taxon>
    </lineage>
</organism>
<accession>P36224</accession>
<accession>D6W0C1</accession>
<gene>
    <name type="primary">JNM1</name>
    <name type="synonym">INS1</name>
    <name type="ordered locus">YMR294W</name>
</gene>
<evidence type="ECO:0000250" key="1"/>
<evidence type="ECO:0000255" key="2"/>
<evidence type="ECO:0000256" key="3">
    <source>
        <dbReference type="SAM" id="MobiDB-lite"/>
    </source>
</evidence>
<evidence type="ECO:0000269" key="4">
    <source>
    </source>
</evidence>
<evidence type="ECO:0000269" key="5">
    <source>
    </source>
</evidence>
<evidence type="ECO:0000269" key="6">
    <source>
    </source>
</evidence>
<evidence type="ECO:0000269" key="7">
    <source>
    </source>
</evidence>
<evidence type="ECO:0000305" key="8"/>
<evidence type="ECO:0007744" key="9">
    <source>
    </source>
</evidence>
<keyword id="KW-0175">Coiled coil</keyword>
<keyword id="KW-0963">Cytoplasm</keyword>
<keyword id="KW-0206">Cytoskeleton</keyword>
<keyword id="KW-0243">Dynein</keyword>
<keyword id="KW-0493">Microtubule</keyword>
<keyword id="KW-0597">Phosphoprotein</keyword>
<keyword id="KW-1185">Reference proteome</keyword>
<feature type="chain" id="PRO_0000084289" description="Nuclear migration protein JNM1">
    <location>
        <begin position="1"/>
        <end position="373"/>
    </location>
</feature>
<feature type="region of interest" description="Disordered" evidence="3">
    <location>
        <begin position="33"/>
        <end position="53"/>
    </location>
</feature>
<feature type="coiled-coil region" evidence="2">
    <location>
        <begin position="114"/>
        <end position="139"/>
    </location>
</feature>
<feature type="coiled-coil region" evidence="2">
    <location>
        <begin position="200"/>
        <end position="245"/>
    </location>
</feature>
<feature type="coiled-coil region" evidence="2">
    <location>
        <begin position="331"/>
        <end position="367"/>
    </location>
</feature>
<feature type="modified residue" description="Phosphoserine" evidence="9">
    <location>
        <position position="91"/>
    </location>
</feature>
<feature type="sequence conflict" description="In Ref. 1; CAA81023." evidence="8" ref="1">
    <original>N</original>
    <variation>S</variation>
    <location>
        <position position="92"/>
    </location>
</feature>
<feature type="sequence conflict" description="In Ref. 1; CAA81023." evidence="8" ref="1">
    <original>K</original>
    <variation>R</variation>
    <location>
        <position position="114"/>
    </location>
</feature>
<feature type="sequence conflict" description="In Ref. 1; CAA81023." evidence="8" ref="1">
    <original>P</original>
    <variation>A</variation>
    <location>
        <position position="193"/>
    </location>
</feature>
<feature type="sequence conflict" description="In Ref. 1; CAA81023." evidence="8" ref="1">
    <original>D</original>
    <variation>E</variation>
    <location>
        <position position="201"/>
    </location>
</feature>
<feature type="sequence conflict" description="In Ref. 1; CAA81023." evidence="8" ref="1">
    <original>S</original>
    <variation>N</variation>
    <location>
        <position position="264"/>
    </location>
</feature>
<reference key="1">
    <citation type="journal article" date="1994" name="J. Cell Biol.">
        <title>The JNM1 gene in the yeast Saccharomyces cerevisiae is required for nuclear migration and spindle orientation during the mitotic cell cycle.</title>
        <authorList>
            <person name="McMillan J.N."/>
            <person name="Tatchell K."/>
        </authorList>
    </citation>
    <scope>NUCLEOTIDE SEQUENCE [GENOMIC DNA]</scope>
</reference>
<reference key="2">
    <citation type="journal article" date="1997" name="Nature">
        <title>The nucleotide sequence of Saccharomyces cerevisiae chromosome XIII.</title>
        <authorList>
            <person name="Bowman S."/>
            <person name="Churcher C.M."/>
            <person name="Badcock K."/>
            <person name="Brown D."/>
            <person name="Chillingworth T."/>
            <person name="Connor R."/>
            <person name="Dedman K."/>
            <person name="Devlin K."/>
            <person name="Gentles S."/>
            <person name="Hamlin N."/>
            <person name="Hunt S."/>
            <person name="Jagels K."/>
            <person name="Lye G."/>
            <person name="Moule S."/>
            <person name="Odell C."/>
            <person name="Pearson D."/>
            <person name="Rajandream M.A."/>
            <person name="Rice P."/>
            <person name="Skelton J."/>
            <person name="Walsh S.V."/>
            <person name="Whitehead S."/>
            <person name="Barrell B.G."/>
        </authorList>
    </citation>
    <scope>NUCLEOTIDE SEQUENCE [LARGE SCALE GENOMIC DNA]</scope>
    <source>
        <strain>ATCC 204508 / S288c</strain>
    </source>
</reference>
<reference key="3">
    <citation type="journal article" date="2014" name="G3 (Bethesda)">
        <title>The reference genome sequence of Saccharomyces cerevisiae: Then and now.</title>
        <authorList>
            <person name="Engel S.R."/>
            <person name="Dietrich F.S."/>
            <person name="Fisk D.G."/>
            <person name="Binkley G."/>
            <person name="Balakrishnan R."/>
            <person name="Costanzo M.C."/>
            <person name="Dwight S.S."/>
            <person name="Hitz B.C."/>
            <person name="Karra K."/>
            <person name="Nash R.S."/>
            <person name="Weng S."/>
            <person name="Wong E.D."/>
            <person name="Lloyd P."/>
            <person name="Skrzypek M.S."/>
            <person name="Miyasato S.R."/>
            <person name="Simison M."/>
            <person name="Cherry J.M."/>
        </authorList>
    </citation>
    <scope>GENOME REANNOTATION</scope>
    <source>
        <strain>ATCC 204508 / S288c</strain>
    </source>
</reference>
<reference key="4">
    <citation type="journal article" date="1998" name="Mol. Biol. Cell">
        <title>The yeast dynactin complex is involved in partitioning the mitotic spindle between mother and daughter cells during anaphase B.</title>
        <authorList>
            <person name="Kahana J.A."/>
            <person name="Schlenstedt G."/>
            <person name="Evanchuk D.M."/>
            <person name="Geiser J.R."/>
            <person name="Hoyt M.A."/>
            <person name="Silver P.A."/>
        </authorList>
    </citation>
    <scope>IDENTIFICATION IN THE DYNACTIN COMPLEX</scope>
    <scope>FUNCTION OF THE DYNACTIN COMPLEX</scope>
</reference>
<reference key="5">
    <citation type="journal article" date="2004" name="Nat. Cell Biol.">
        <title>Dynactin is involved in a checkpoint to monitor cell wall synthesis in Saccharomyces cerevisiae.</title>
        <authorList>
            <person name="Suzuki M."/>
            <person name="Igarashi R."/>
            <person name="Sekiya M."/>
            <person name="Utsugi T."/>
            <person name="Morishita S."/>
            <person name="Yukawa M."/>
            <person name="Ohya Y."/>
        </authorList>
    </citation>
    <scope>FUNCTION OF THE DYNACTIN COMPLEX</scope>
</reference>
<reference key="6">
    <citation type="journal article" date="2005" name="Mol. Biol. Cell">
        <title>Alanine scanning of Arp1 delineates a putative binding site for Jnm1/dynamitin and Nip100/p150Glued.</title>
        <authorList>
            <person name="Clark S.W."/>
            <person name="Rose M.D."/>
        </authorList>
    </citation>
    <scope>INTERACTION WITH ARP1</scope>
</reference>
<reference key="7">
    <citation type="journal article" date="2006" name="Mol. Biol. Cell">
        <title>Arp10p is a pointed-end-associated component of yeast dynactin.</title>
        <authorList>
            <person name="Clark S.W."/>
            <person name="Rose M.D."/>
        </authorList>
    </citation>
    <scope>SELF-ASSOCIATION</scope>
    <scope>INTERACTION WITH ARP1 AND ARP10</scope>
</reference>
<reference key="8">
    <citation type="journal article" date="2008" name="Mol. Cell. Proteomics">
        <title>A multidimensional chromatography technology for in-depth phosphoproteome analysis.</title>
        <authorList>
            <person name="Albuquerque C.P."/>
            <person name="Smolka M.B."/>
            <person name="Payne S.H."/>
            <person name="Bafna V."/>
            <person name="Eng J."/>
            <person name="Zhou H."/>
        </authorList>
    </citation>
    <scope>PHOSPHORYLATION [LARGE SCALE ANALYSIS] AT SER-91</scope>
    <scope>IDENTIFICATION BY MASS SPECTROMETRY [LARGE SCALE ANALYSIS]</scope>
</reference>